<sequence>MQKTELDDQKLVEEIARRIREILELLGENPEREGLKETPERVAKALLEMTSGLRTPPPQIKVFSLGEDGEVYEKNQIVLIKDVNFSSLCEHHMLPIIGKIHVAYIVSNSGKVAGFSKIIRIVNYYSSRLQIQERLVEQIADAIMNSEIKPKGVMVIGNAIHMCSYVRGVKDKEAKLVSVAYRGLFKTNRALQNHVFRLLDNANKVNLL</sequence>
<feature type="chain" id="PRO_1000204296" description="GTP cyclohydrolase 1">
    <location>
        <begin position="1"/>
        <end position="208"/>
    </location>
</feature>
<feature type="binding site" evidence="1">
    <location>
        <position position="89"/>
    </location>
    <ligand>
        <name>Zn(2+)</name>
        <dbReference type="ChEBI" id="CHEBI:29105"/>
    </ligand>
</feature>
<feature type="binding site" evidence="1">
    <location>
        <position position="92"/>
    </location>
    <ligand>
        <name>Zn(2+)</name>
        <dbReference type="ChEBI" id="CHEBI:29105"/>
    </ligand>
</feature>
<feature type="binding site" evidence="1">
    <location>
        <position position="163"/>
    </location>
    <ligand>
        <name>Zn(2+)</name>
        <dbReference type="ChEBI" id="CHEBI:29105"/>
    </ligand>
</feature>
<accession>C3MR62</accession>
<organism>
    <name type="scientific">Saccharolobus islandicus (strain L.S.2.15 / Lassen #1)</name>
    <name type="common">Sulfolobus islandicus</name>
    <dbReference type="NCBI Taxonomy" id="429572"/>
    <lineage>
        <taxon>Archaea</taxon>
        <taxon>Thermoproteota</taxon>
        <taxon>Thermoprotei</taxon>
        <taxon>Sulfolobales</taxon>
        <taxon>Sulfolobaceae</taxon>
        <taxon>Saccharolobus</taxon>
    </lineage>
</organism>
<proteinExistence type="inferred from homology"/>
<reference key="1">
    <citation type="journal article" date="2009" name="Proc. Natl. Acad. Sci. U.S.A.">
        <title>Biogeography of the Sulfolobus islandicus pan-genome.</title>
        <authorList>
            <person name="Reno M.L."/>
            <person name="Held N.L."/>
            <person name="Fields C.J."/>
            <person name="Burke P.V."/>
            <person name="Whitaker R.J."/>
        </authorList>
    </citation>
    <scope>NUCLEOTIDE SEQUENCE [LARGE SCALE GENOMIC DNA]</scope>
    <source>
        <strain>L.S.2.15 / Lassen #1</strain>
    </source>
</reference>
<keyword id="KW-0342">GTP-binding</keyword>
<keyword id="KW-0378">Hydrolase</keyword>
<keyword id="KW-0479">Metal-binding</keyword>
<keyword id="KW-0547">Nucleotide-binding</keyword>
<keyword id="KW-0554">One-carbon metabolism</keyword>
<keyword id="KW-0862">Zinc</keyword>
<gene>
    <name evidence="1" type="primary">folE</name>
    <name type="ordered locus">LS215_1879</name>
</gene>
<name>GCH1_SACI2</name>
<comment type="catalytic activity">
    <reaction evidence="1">
        <text>GTP + H2O = 7,8-dihydroneopterin 3'-triphosphate + formate + H(+)</text>
        <dbReference type="Rhea" id="RHEA:17473"/>
        <dbReference type="ChEBI" id="CHEBI:15377"/>
        <dbReference type="ChEBI" id="CHEBI:15378"/>
        <dbReference type="ChEBI" id="CHEBI:15740"/>
        <dbReference type="ChEBI" id="CHEBI:37565"/>
        <dbReference type="ChEBI" id="CHEBI:58462"/>
        <dbReference type="EC" id="3.5.4.16"/>
    </reaction>
</comment>
<comment type="pathway">
    <text evidence="1">Cofactor biosynthesis; 7,8-dihydroneopterin triphosphate biosynthesis; 7,8-dihydroneopterin triphosphate from GTP: step 1/1.</text>
</comment>
<comment type="subunit">
    <text evidence="1">Homomer.</text>
</comment>
<comment type="similarity">
    <text evidence="1">Belongs to the GTP cyclohydrolase I family.</text>
</comment>
<evidence type="ECO:0000255" key="1">
    <source>
        <dbReference type="HAMAP-Rule" id="MF_00223"/>
    </source>
</evidence>
<protein>
    <recommendedName>
        <fullName evidence="1">GTP cyclohydrolase 1</fullName>
        <ecNumber evidence="1">3.5.4.16</ecNumber>
    </recommendedName>
    <alternativeName>
        <fullName evidence="1">GTP cyclohydrolase I</fullName>
        <shortName evidence="1">GTP-CH-I</shortName>
    </alternativeName>
</protein>
<dbReference type="EC" id="3.5.4.16" evidence="1"/>
<dbReference type="EMBL" id="CP001399">
    <property type="protein sequence ID" value="ACP35875.1"/>
    <property type="molecule type" value="Genomic_DNA"/>
</dbReference>
<dbReference type="RefSeq" id="WP_012711716.1">
    <property type="nucleotide sequence ID" value="NC_012589.1"/>
</dbReference>
<dbReference type="SMR" id="C3MR62"/>
<dbReference type="GeneID" id="84062091"/>
<dbReference type="KEGG" id="sis:LS215_1879"/>
<dbReference type="HOGENOM" id="CLU_049768_3_2_2"/>
<dbReference type="OrthoDB" id="8438at2157"/>
<dbReference type="UniPathway" id="UPA00848">
    <property type="reaction ID" value="UER00151"/>
</dbReference>
<dbReference type="Proteomes" id="UP000001747">
    <property type="component" value="Chromosome"/>
</dbReference>
<dbReference type="GO" id="GO:0005737">
    <property type="term" value="C:cytoplasm"/>
    <property type="evidence" value="ECO:0007669"/>
    <property type="project" value="TreeGrafter"/>
</dbReference>
<dbReference type="GO" id="GO:0005525">
    <property type="term" value="F:GTP binding"/>
    <property type="evidence" value="ECO:0007669"/>
    <property type="project" value="UniProtKB-KW"/>
</dbReference>
<dbReference type="GO" id="GO:0003934">
    <property type="term" value="F:GTP cyclohydrolase I activity"/>
    <property type="evidence" value="ECO:0007669"/>
    <property type="project" value="UniProtKB-UniRule"/>
</dbReference>
<dbReference type="GO" id="GO:0008270">
    <property type="term" value="F:zinc ion binding"/>
    <property type="evidence" value="ECO:0007669"/>
    <property type="project" value="UniProtKB-UniRule"/>
</dbReference>
<dbReference type="GO" id="GO:0006730">
    <property type="term" value="P:one-carbon metabolic process"/>
    <property type="evidence" value="ECO:0007669"/>
    <property type="project" value="UniProtKB-UniRule"/>
</dbReference>
<dbReference type="GO" id="GO:0006729">
    <property type="term" value="P:tetrahydrobiopterin biosynthetic process"/>
    <property type="evidence" value="ECO:0007669"/>
    <property type="project" value="TreeGrafter"/>
</dbReference>
<dbReference type="GO" id="GO:0046654">
    <property type="term" value="P:tetrahydrofolate biosynthetic process"/>
    <property type="evidence" value="ECO:0007669"/>
    <property type="project" value="UniProtKB-UniRule"/>
</dbReference>
<dbReference type="FunFam" id="1.10.286.10:FF:000007">
    <property type="entry name" value="GTP cyclohydrolase 1"/>
    <property type="match status" value="1"/>
</dbReference>
<dbReference type="FunFam" id="3.30.1130.10:FF:000001">
    <property type="entry name" value="GTP cyclohydrolase 1"/>
    <property type="match status" value="1"/>
</dbReference>
<dbReference type="Gene3D" id="1.10.286.10">
    <property type="match status" value="1"/>
</dbReference>
<dbReference type="Gene3D" id="3.30.1130.10">
    <property type="match status" value="1"/>
</dbReference>
<dbReference type="HAMAP" id="MF_00223">
    <property type="entry name" value="FolE"/>
    <property type="match status" value="1"/>
</dbReference>
<dbReference type="InterPro" id="IPR043133">
    <property type="entry name" value="GTP-CH-I_C/QueF"/>
</dbReference>
<dbReference type="InterPro" id="IPR043134">
    <property type="entry name" value="GTP-CH-I_N"/>
</dbReference>
<dbReference type="InterPro" id="IPR001474">
    <property type="entry name" value="GTP_CycHdrlase_I"/>
</dbReference>
<dbReference type="InterPro" id="IPR018234">
    <property type="entry name" value="GTP_CycHdrlase_I_CS"/>
</dbReference>
<dbReference type="InterPro" id="IPR020602">
    <property type="entry name" value="GTP_CycHdrlase_I_dom"/>
</dbReference>
<dbReference type="NCBIfam" id="NF006825">
    <property type="entry name" value="PRK09347.1-2"/>
    <property type="match status" value="1"/>
</dbReference>
<dbReference type="NCBIfam" id="NF006826">
    <property type="entry name" value="PRK09347.1-3"/>
    <property type="match status" value="1"/>
</dbReference>
<dbReference type="PANTHER" id="PTHR11109:SF7">
    <property type="entry name" value="GTP CYCLOHYDROLASE 1"/>
    <property type="match status" value="1"/>
</dbReference>
<dbReference type="PANTHER" id="PTHR11109">
    <property type="entry name" value="GTP CYCLOHYDROLASE I"/>
    <property type="match status" value="1"/>
</dbReference>
<dbReference type="Pfam" id="PF01227">
    <property type="entry name" value="GTP_cyclohydroI"/>
    <property type="match status" value="1"/>
</dbReference>
<dbReference type="SUPFAM" id="SSF55620">
    <property type="entry name" value="Tetrahydrobiopterin biosynthesis enzymes-like"/>
    <property type="match status" value="1"/>
</dbReference>
<dbReference type="PROSITE" id="PS00859">
    <property type="entry name" value="GTP_CYCLOHYDROL_1_1"/>
    <property type="match status" value="1"/>
</dbReference>
<dbReference type="PROSITE" id="PS00860">
    <property type="entry name" value="GTP_CYCLOHYDROL_1_2"/>
    <property type="match status" value="1"/>
</dbReference>